<sequence>MEQQQSKNNAHVSKLFVCTAVDCKDDIEEKFERSFLTLQMQISGLSDKEMHDMLSQAVCKEKQHEDISIGFLYIMLTDPSMASKTYRDVTLVSRDGMNGIVTNLTFLVAEKYTKLTEVARRQLIWLLREFVKHQVLSVENVIWNCLRQAGGGDVSSRNLFLIESLLDIFIEFRTWLESNPFLVQSTVYSFVRLIEDHANPALLSLRQKEVKFTISLIRERFHDIIPLGRDFVRLLQNVARIPEFEQLWRDILFNPKMLHQTFNGIWQLLHIRTSRRFLQCRLLPEMERKISFLASSVKFGNQKRYQDWFQDKYFATPESHSLRSDLIRFIINVIHPTNDMLCSDIIPRWAIIGWLISSCTNPIASANAKLSLFYDWLFFDPAKDNIMNIEPGILVMYHSIRNHPFVSSTLLDFLCRITKNFFVKHEDKIRIGVYNSLKLILEKQVIPNLQPLFESPKLDRELRNLIRDNFREFLSPPANLGQLLYTSLHPVQGHILKIESDQRILHCENVDLHETGLINISGTVDEDKKISLVPTDQEIESVFSGETAENLRRVHNIEDNTDDDDDLPLSEVRLKEKPKVELAEAIAESFDAFVTKRNSYTWEAFLKDFRPLPASAFEEFQLNYVISNTVLILRETLPQQNIFSESKTEEKHLAKSISYPLYGLFRFLYENDEKSKKPFQTLLSEICEGIPEIGYLLLYFMKIYCKLQTRKNSQQSYQFKTTIYRQICDAADEKIGHCLLRDLDLLEKENTNIFLWLLPDIYREFKSIATNNTDILRITLRCIDAKNVRDILYSVAQGKLTIFKQDGLIDCIRQSLEFETYEQFCLWQIVQAHDVPLRCIQDILPELEAGSHPEALSHFLLLLKNEEPTNEIIRLMLSRESKSKGDPFVTSVLRFWCQRYEEKLSEIIASLLTSKYPSSSPNKRKRPPKGISVSTSTPSADQVLNHLEHYRRSCRHGTGTGLYVHDMMQRALQSAYSHSNDSTKKQFCDLFALAAEEDTTVGRRGGSGRGRKQPGSKKDVNNHGTSKKNAEMVKTIYSSDDNSSEEDWSKSKILQTAKRRKKANNDSD</sequence>
<reference key="1">
    <citation type="journal article" date="2007" name="Nature">
        <title>Evolution of genes and genomes on the Drosophila phylogeny.</title>
        <authorList>
            <consortium name="Drosophila 12 genomes consortium"/>
        </authorList>
    </citation>
    <scope>NUCLEOTIDE SEQUENCE [LARGE SCALE GENOMIC DNA]</scope>
    <source>
        <strain>Rob3c / Tucson 14021-0248.25</strain>
    </source>
</reference>
<accession>B4IMI7</accession>
<dbReference type="EMBL" id="CH481016">
    <property type="protein sequence ID" value="EDW48749.1"/>
    <property type="molecule type" value="Genomic_DNA"/>
</dbReference>
<dbReference type="SMR" id="B4IMI7"/>
<dbReference type="STRING" id="7238.B4IMI7"/>
<dbReference type="EnsemblMetazoa" id="FBtr0209734">
    <property type="protein sequence ID" value="FBpp0208226"/>
    <property type="gene ID" value="FBgn0181602"/>
</dbReference>
<dbReference type="EnsemblMetazoa" id="XM_002044911.2">
    <property type="protein sequence ID" value="XP_002044947.1"/>
    <property type="gene ID" value="LOC6620745"/>
</dbReference>
<dbReference type="GeneID" id="6620745"/>
<dbReference type="KEGG" id="dse:6620745"/>
<dbReference type="CTD" id="65123"/>
<dbReference type="HOGENOM" id="CLU_007659_0_0_1"/>
<dbReference type="OMA" id="FEQYCLW"/>
<dbReference type="OrthoDB" id="32956at7215"/>
<dbReference type="PhylomeDB" id="B4IMI7"/>
<dbReference type="Proteomes" id="UP000001292">
    <property type="component" value="Unassembled WGS sequence"/>
</dbReference>
<dbReference type="GO" id="GO:0005737">
    <property type="term" value="C:cytoplasm"/>
    <property type="evidence" value="ECO:0007669"/>
    <property type="project" value="UniProtKB-SubCell"/>
</dbReference>
<dbReference type="GO" id="GO:0005634">
    <property type="term" value="C:nucleus"/>
    <property type="evidence" value="ECO:0007669"/>
    <property type="project" value="UniProtKB-SubCell"/>
</dbReference>
<dbReference type="InterPro" id="IPR056518">
    <property type="entry name" value="HEAT_Ints3_C"/>
</dbReference>
<dbReference type="InterPro" id="IPR045334">
    <property type="entry name" value="INTS3"/>
</dbReference>
<dbReference type="InterPro" id="IPR019333">
    <property type="entry name" value="INTS3_N"/>
</dbReference>
<dbReference type="PANTHER" id="PTHR13587">
    <property type="entry name" value="INTEGRATOR COMPLEX SUBUNIT 3"/>
    <property type="match status" value="1"/>
</dbReference>
<dbReference type="PANTHER" id="PTHR13587:SF7">
    <property type="entry name" value="INTEGRATOR COMPLEX SUBUNIT 3"/>
    <property type="match status" value="1"/>
</dbReference>
<dbReference type="Pfam" id="PF24566">
    <property type="entry name" value="HEAT_Ints3_C"/>
    <property type="match status" value="1"/>
</dbReference>
<dbReference type="Pfam" id="PF10189">
    <property type="entry name" value="Ints3_N"/>
    <property type="match status" value="1"/>
</dbReference>
<comment type="function">
    <text evidence="3">Component of the integrator complex, a multiprotein complex that terminates RNA polymerase II (Pol II) transcription in the promoter-proximal region of genes. The integrator complex provides a quality checkpoint during transcription elongation by driving premature transcription termination of transcripts that are unfavorably configured for transcriptional elongation: the complex terminates transcription by (1) catalyzing dephosphorylation of the C-terminal domain (CTD) of Pol II subunit Polr2A/Rbp1 and Spt5, and (2) degrading the exiting nascent RNA transcript via endonuclease activity. The integrator complex is also involved in the 3'-end processing of the U7 snRNA, and also the spliceosomal snRNAs U1, U2, U4 and U5.</text>
</comment>
<comment type="subunit">
    <text evidence="3">Belongs to the multiprotein complex Integrator, at least composed of IntS1, IntS2, IntS3, IntS4, omd/IntS5, IntS6, defl/IntS7, IntS8, IntS9, IntS10, IntS11, IntS12, asun/IntS13, IntS14 and IntS15. The core complex associates with protein phosphatase 2A subunits mts/PP2A and Pp2A-29B, to form the Integrator-PP2A (INTAC) complex.</text>
</comment>
<comment type="subcellular location">
    <subcellularLocation>
        <location evidence="2">Nucleus</location>
    </subcellularLocation>
    <subcellularLocation>
        <location evidence="2">Cytoplasm</location>
    </subcellularLocation>
</comment>
<comment type="similarity">
    <text evidence="5">Belongs to the Integrator subunit 3 family.</text>
</comment>
<feature type="chain" id="PRO_0000385312" description="Integrator complex subunit 3 homolog">
    <location>
        <begin position="1"/>
        <end position="1068"/>
    </location>
</feature>
<feature type="region of interest" description="Disordered" evidence="4">
    <location>
        <begin position="916"/>
        <end position="939"/>
    </location>
</feature>
<feature type="region of interest" description="Disordered" evidence="4">
    <location>
        <begin position="1001"/>
        <end position="1068"/>
    </location>
</feature>
<feature type="modified residue" description="Phosphoserine" evidence="1">
    <location>
        <position position="1038"/>
    </location>
</feature>
<feature type="modified residue" description="Phosphoserine" evidence="1">
    <location>
        <position position="1039"/>
    </location>
</feature>
<feature type="modified residue" description="Phosphoserine" evidence="1">
    <location>
        <position position="1043"/>
    </location>
</feature>
<feature type="modified residue" description="Phosphoserine" evidence="1">
    <location>
        <position position="1044"/>
    </location>
</feature>
<proteinExistence type="inferred from homology"/>
<name>INT3_DROSE</name>
<evidence type="ECO:0000250" key="1"/>
<evidence type="ECO:0000250" key="2">
    <source>
        <dbReference type="UniProtKB" id="Q68E01"/>
    </source>
</evidence>
<evidence type="ECO:0000250" key="3">
    <source>
        <dbReference type="UniProtKB" id="Q7PLS8"/>
    </source>
</evidence>
<evidence type="ECO:0000256" key="4">
    <source>
        <dbReference type="SAM" id="MobiDB-lite"/>
    </source>
</evidence>
<evidence type="ECO:0000305" key="5"/>
<organism>
    <name type="scientific">Drosophila sechellia</name>
    <name type="common">Fruit fly</name>
    <dbReference type="NCBI Taxonomy" id="7238"/>
    <lineage>
        <taxon>Eukaryota</taxon>
        <taxon>Metazoa</taxon>
        <taxon>Ecdysozoa</taxon>
        <taxon>Arthropoda</taxon>
        <taxon>Hexapoda</taxon>
        <taxon>Insecta</taxon>
        <taxon>Pterygota</taxon>
        <taxon>Neoptera</taxon>
        <taxon>Endopterygota</taxon>
        <taxon>Diptera</taxon>
        <taxon>Brachycera</taxon>
        <taxon>Muscomorpha</taxon>
        <taxon>Ephydroidea</taxon>
        <taxon>Drosophilidae</taxon>
        <taxon>Drosophila</taxon>
        <taxon>Sophophora</taxon>
    </lineage>
</organism>
<protein>
    <recommendedName>
        <fullName>Integrator complex subunit 3 homolog</fullName>
    </recommendedName>
    <alternativeName>
        <fullName>SOSS complex subunit A homolog</fullName>
    </alternativeName>
</protein>
<gene>
    <name type="primary">IntS3</name>
    <name type="ORF">GM26749</name>
</gene>
<keyword id="KW-0963">Cytoplasm</keyword>
<keyword id="KW-0539">Nucleus</keyword>
<keyword id="KW-0597">Phosphoprotein</keyword>
<keyword id="KW-1185">Reference proteome</keyword>